<evidence type="ECO:0000255" key="1"/>
<evidence type="ECO:0000256" key="2">
    <source>
        <dbReference type="SAM" id="MobiDB-lite"/>
    </source>
</evidence>
<evidence type="ECO:0000269" key="3">
    <source>
    </source>
</evidence>
<evidence type="ECO:0000269" key="4">
    <source>
    </source>
</evidence>
<evidence type="ECO:0000269" key="5">
    <source>
    </source>
</evidence>
<evidence type="ECO:0000269" key="6">
    <source>
    </source>
</evidence>
<evidence type="ECO:0000269" key="7">
    <source>
    </source>
</evidence>
<evidence type="ECO:0000269" key="8">
    <source>
    </source>
</evidence>
<evidence type="ECO:0000305" key="9"/>
<evidence type="ECO:0000312" key="10">
    <source>
        <dbReference type="EMBL" id="AAF45654.3"/>
    </source>
</evidence>
<evidence type="ECO:0000312" key="11">
    <source>
        <dbReference type="EMBL" id="AAL48553.1"/>
    </source>
</evidence>
<evidence type="ECO:0000312" key="12">
    <source>
        <dbReference type="EMBL" id="CAA16810.1"/>
    </source>
</evidence>
<evidence type="ECO:0000312" key="13">
    <source>
        <dbReference type="EMBL" id="CAF25166.1"/>
    </source>
</evidence>
<evidence type="ECO:0000312" key="14">
    <source>
        <dbReference type="FlyBase" id="FBgn0001189"/>
    </source>
</evidence>
<protein>
    <recommendedName>
        <fullName>Protein halfway</fullName>
    </recommendedName>
    <alternativeName>
        <fullName>Protein singed wings</fullName>
    </alternativeName>
</protein>
<reference evidence="9 13" key="1">
    <citation type="journal article" date="2004" name="BMC Genet.">
        <title>Molecular characterization of the singed wings locus of Drosophila melanogaster.</title>
        <authorList>
            <person name="Schwartz Y.B."/>
            <person name="Boykova T."/>
            <person name="Belyaeva E.S."/>
            <person name="Ashburner M."/>
            <person name="Zhimulev I.F."/>
        </authorList>
    </citation>
    <scope>NUCLEOTIDE SEQUENCE [GENOMIC DNA]</scope>
    <scope>FUNCTION</scope>
    <scope>MUTAGENESIS OF CYS-379</scope>
    <scope>DISRUPTION PHENOTYPE</scope>
    <source>
        <strain evidence="13">y swi w</strain>
    </source>
</reference>
<reference evidence="10" key="2">
    <citation type="journal article" date="2000" name="Science">
        <title>The genome sequence of Drosophila melanogaster.</title>
        <authorList>
            <person name="Adams M.D."/>
            <person name="Celniker S.E."/>
            <person name="Holt R.A."/>
            <person name="Evans C.A."/>
            <person name="Gocayne J.D."/>
            <person name="Amanatides P.G."/>
            <person name="Scherer S.E."/>
            <person name="Li P.W."/>
            <person name="Hoskins R.A."/>
            <person name="Galle R.F."/>
            <person name="George R.A."/>
            <person name="Lewis S.E."/>
            <person name="Richards S."/>
            <person name="Ashburner M."/>
            <person name="Henderson S.N."/>
            <person name="Sutton G.G."/>
            <person name="Wortman J.R."/>
            <person name="Yandell M.D."/>
            <person name="Zhang Q."/>
            <person name="Chen L.X."/>
            <person name="Brandon R.C."/>
            <person name="Rogers Y.-H.C."/>
            <person name="Blazej R.G."/>
            <person name="Champe M."/>
            <person name="Pfeiffer B.D."/>
            <person name="Wan K.H."/>
            <person name="Doyle C."/>
            <person name="Baxter E.G."/>
            <person name="Helt G."/>
            <person name="Nelson C.R."/>
            <person name="Miklos G.L.G."/>
            <person name="Abril J.F."/>
            <person name="Agbayani A."/>
            <person name="An H.-J."/>
            <person name="Andrews-Pfannkoch C."/>
            <person name="Baldwin D."/>
            <person name="Ballew R.M."/>
            <person name="Basu A."/>
            <person name="Baxendale J."/>
            <person name="Bayraktaroglu L."/>
            <person name="Beasley E.M."/>
            <person name="Beeson K.Y."/>
            <person name="Benos P.V."/>
            <person name="Berman B.P."/>
            <person name="Bhandari D."/>
            <person name="Bolshakov S."/>
            <person name="Borkova D."/>
            <person name="Botchan M.R."/>
            <person name="Bouck J."/>
            <person name="Brokstein P."/>
            <person name="Brottier P."/>
            <person name="Burtis K.C."/>
            <person name="Busam D.A."/>
            <person name="Butler H."/>
            <person name="Cadieu E."/>
            <person name="Center A."/>
            <person name="Chandra I."/>
            <person name="Cherry J.M."/>
            <person name="Cawley S."/>
            <person name="Dahlke C."/>
            <person name="Davenport L.B."/>
            <person name="Davies P."/>
            <person name="de Pablos B."/>
            <person name="Delcher A."/>
            <person name="Deng Z."/>
            <person name="Mays A.D."/>
            <person name="Dew I."/>
            <person name="Dietz S.M."/>
            <person name="Dodson K."/>
            <person name="Doup L.E."/>
            <person name="Downes M."/>
            <person name="Dugan-Rocha S."/>
            <person name="Dunkov B.C."/>
            <person name="Dunn P."/>
            <person name="Durbin K.J."/>
            <person name="Evangelista C.C."/>
            <person name="Ferraz C."/>
            <person name="Ferriera S."/>
            <person name="Fleischmann W."/>
            <person name="Fosler C."/>
            <person name="Gabrielian A.E."/>
            <person name="Garg N.S."/>
            <person name="Gelbart W.M."/>
            <person name="Glasser K."/>
            <person name="Glodek A."/>
            <person name="Gong F."/>
            <person name="Gorrell J.H."/>
            <person name="Gu Z."/>
            <person name="Guan P."/>
            <person name="Harris M."/>
            <person name="Harris N.L."/>
            <person name="Harvey D.A."/>
            <person name="Heiman T.J."/>
            <person name="Hernandez J.R."/>
            <person name="Houck J."/>
            <person name="Hostin D."/>
            <person name="Houston K.A."/>
            <person name="Howland T.J."/>
            <person name="Wei M.-H."/>
            <person name="Ibegwam C."/>
            <person name="Jalali M."/>
            <person name="Kalush F."/>
            <person name="Karpen G.H."/>
            <person name="Ke Z."/>
            <person name="Kennison J.A."/>
            <person name="Ketchum K.A."/>
            <person name="Kimmel B.E."/>
            <person name="Kodira C.D."/>
            <person name="Kraft C.L."/>
            <person name="Kravitz S."/>
            <person name="Kulp D."/>
            <person name="Lai Z."/>
            <person name="Lasko P."/>
            <person name="Lei Y."/>
            <person name="Levitsky A.A."/>
            <person name="Li J.H."/>
            <person name="Li Z."/>
            <person name="Liang Y."/>
            <person name="Lin X."/>
            <person name="Liu X."/>
            <person name="Mattei B."/>
            <person name="McIntosh T.C."/>
            <person name="McLeod M.P."/>
            <person name="McPherson D."/>
            <person name="Merkulov G."/>
            <person name="Milshina N.V."/>
            <person name="Mobarry C."/>
            <person name="Morris J."/>
            <person name="Moshrefi A."/>
            <person name="Mount S.M."/>
            <person name="Moy M."/>
            <person name="Murphy B."/>
            <person name="Murphy L."/>
            <person name="Muzny D.M."/>
            <person name="Nelson D.L."/>
            <person name="Nelson D.R."/>
            <person name="Nelson K.A."/>
            <person name="Nixon K."/>
            <person name="Nusskern D.R."/>
            <person name="Pacleb J.M."/>
            <person name="Palazzolo M."/>
            <person name="Pittman G.S."/>
            <person name="Pan S."/>
            <person name="Pollard J."/>
            <person name="Puri V."/>
            <person name="Reese M.G."/>
            <person name="Reinert K."/>
            <person name="Remington K."/>
            <person name="Saunders R.D.C."/>
            <person name="Scheeler F."/>
            <person name="Shen H."/>
            <person name="Shue B.C."/>
            <person name="Siden-Kiamos I."/>
            <person name="Simpson M."/>
            <person name="Skupski M.P."/>
            <person name="Smith T.J."/>
            <person name="Spier E."/>
            <person name="Spradling A.C."/>
            <person name="Stapleton M."/>
            <person name="Strong R."/>
            <person name="Sun E."/>
            <person name="Svirskas R."/>
            <person name="Tector C."/>
            <person name="Turner R."/>
            <person name="Venter E."/>
            <person name="Wang A.H."/>
            <person name="Wang X."/>
            <person name="Wang Z.-Y."/>
            <person name="Wassarman D.A."/>
            <person name="Weinstock G.M."/>
            <person name="Weissenbach J."/>
            <person name="Williams S.M."/>
            <person name="Woodage T."/>
            <person name="Worley K.C."/>
            <person name="Wu D."/>
            <person name="Yang S."/>
            <person name="Yao Q.A."/>
            <person name="Ye J."/>
            <person name="Yeh R.-F."/>
            <person name="Zaveri J.S."/>
            <person name="Zhan M."/>
            <person name="Zhang G."/>
            <person name="Zhao Q."/>
            <person name="Zheng L."/>
            <person name="Zheng X.H."/>
            <person name="Zhong F.N."/>
            <person name="Zhong W."/>
            <person name="Zhou X."/>
            <person name="Zhu S.C."/>
            <person name="Zhu X."/>
            <person name="Smith H.O."/>
            <person name="Gibbs R.A."/>
            <person name="Myers E.W."/>
            <person name="Rubin G.M."/>
            <person name="Venter J.C."/>
        </authorList>
    </citation>
    <scope>NUCLEOTIDE SEQUENCE [LARGE SCALE GENOMIC DNA]</scope>
    <source>
        <strain evidence="3">Berkeley</strain>
    </source>
</reference>
<reference evidence="9 10" key="3">
    <citation type="journal article" date="2002" name="Genome Biol.">
        <title>Annotation of the Drosophila melanogaster euchromatic genome: a systematic review.</title>
        <authorList>
            <person name="Misra S."/>
            <person name="Crosby M.A."/>
            <person name="Mungall C.J."/>
            <person name="Matthews B.B."/>
            <person name="Campbell K.S."/>
            <person name="Hradecky P."/>
            <person name="Huang Y."/>
            <person name="Kaminker J.S."/>
            <person name="Millburn G.H."/>
            <person name="Prochnik S.E."/>
            <person name="Smith C.D."/>
            <person name="Tupy J.L."/>
            <person name="Whitfield E.J."/>
            <person name="Bayraktaroglu L."/>
            <person name="Berman B.P."/>
            <person name="Bettencourt B.R."/>
            <person name="Celniker S.E."/>
            <person name="de Grey A.D.N.J."/>
            <person name="Drysdale R.A."/>
            <person name="Harris N.L."/>
            <person name="Richter J."/>
            <person name="Russo S."/>
            <person name="Schroeder A.J."/>
            <person name="Shu S.Q."/>
            <person name="Stapleton M."/>
            <person name="Yamada C."/>
            <person name="Ashburner M."/>
            <person name="Gelbart W.M."/>
            <person name="Rubin G.M."/>
            <person name="Lewis S.E."/>
        </authorList>
    </citation>
    <scope>GENOME REANNOTATION</scope>
    <source>
        <strain>Berkeley</strain>
    </source>
</reference>
<reference evidence="12" key="4">
    <citation type="journal article" date="2000" name="Science">
        <title>From sequence to chromosome: the tip of the X chromosome of D. melanogaster.</title>
        <authorList>
            <person name="Benos P.V."/>
            <person name="Gatt M.K."/>
            <person name="Ashburner M."/>
            <person name="Murphy L."/>
            <person name="Harris D."/>
            <person name="Barrell B.G."/>
            <person name="Ferraz C."/>
            <person name="Vidal S."/>
            <person name="Brun C."/>
            <person name="Demailles J."/>
            <person name="Cadieu E."/>
            <person name="Dreano S."/>
            <person name="Gloux S."/>
            <person name="Lelaure V."/>
            <person name="Mottier S."/>
            <person name="Galibert F."/>
            <person name="Borkova D."/>
            <person name="Minana B."/>
            <person name="Kafatos F.C."/>
            <person name="Louis C."/>
            <person name="Siden-Kiamos I."/>
            <person name="Bolshakov S."/>
            <person name="Papagiannakis G."/>
            <person name="Spanos L."/>
            <person name="Cox S."/>
            <person name="Madueno E."/>
            <person name="de Pablos B."/>
            <person name="Modolell J."/>
            <person name="Peter A."/>
            <person name="Schoettler P."/>
            <person name="Werner M."/>
            <person name="Mourkioti F."/>
            <person name="Beinert N."/>
            <person name="Dowe G."/>
            <person name="Schaefer U."/>
            <person name="Jaeckle H."/>
            <person name="Bucheton A."/>
            <person name="Callister D.M."/>
            <person name="Campbell L.A."/>
            <person name="Darlamitsou A."/>
            <person name="Henderson N.S."/>
            <person name="McMillan P.J."/>
            <person name="Salles C."/>
            <person name="Tait E.A."/>
            <person name="Valenti P."/>
            <person name="Saunders R.D.C."/>
            <person name="Glover D.M."/>
        </authorList>
    </citation>
    <scope>NUCLEOTIDE SEQUENCE [LARGE SCALE GENOMIC DNA]</scope>
    <source>
        <strain evidence="4">Oregon-R</strain>
    </source>
</reference>
<reference evidence="11" key="5">
    <citation type="journal article" date="2002" name="Genome Biol.">
        <title>A Drosophila full-length cDNA resource.</title>
        <authorList>
            <person name="Stapleton M."/>
            <person name="Carlson J.W."/>
            <person name="Brokstein P."/>
            <person name="Yu C."/>
            <person name="Champe M."/>
            <person name="George R.A."/>
            <person name="Guarin H."/>
            <person name="Kronmiller B."/>
            <person name="Pacleb J.M."/>
            <person name="Park S."/>
            <person name="Wan K.H."/>
            <person name="Rubin G.M."/>
            <person name="Celniker S.E."/>
        </authorList>
    </citation>
    <scope>NUCLEOTIDE SEQUENCE [LARGE SCALE MRNA]</scope>
    <source>
        <strain evidence="11">Berkeley</strain>
        <tissue evidence="5">Embryo</tissue>
    </source>
</reference>
<reference key="6">
    <citation type="journal article" date="2007" name="Glycobiology">
        <title>Identification of N-glycosylated proteins from the central nervous system of Drosophila melanogaster.</title>
        <authorList>
            <person name="Koles K."/>
            <person name="Lim J.-M."/>
            <person name="Aoki K."/>
            <person name="Porterfield M."/>
            <person name="Tiemeyer M."/>
            <person name="Wells L."/>
            <person name="Panin V."/>
        </authorList>
    </citation>
    <scope>GLYCOSYLATION [LARGE SCALE ANALYSIS] AT ASN-221 AND ASN-246</scope>
    <scope>IDENTIFICATION BY MASS SPECTROMETRY</scope>
    <source>
        <strain>Oregon-R</strain>
        <tissue>Head</tissue>
    </source>
</reference>
<reference key="7">
    <citation type="journal article" date="2009" name="Nat. Biotechnol.">
        <title>Mass-spectrometric identification and relative quantification of N-linked cell surface glycoproteins.</title>
        <authorList>
            <person name="Wollscheid B."/>
            <person name="Bausch-Fluck D."/>
            <person name="Henderson C."/>
            <person name="O'Brien R."/>
            <person name="Bibel M."/>
            <person name="Schiess R."/>
            <person name="Aebersold R."/>
            <person name="Watts J.D."/>
        </authorList>
    </citation>
    <scope>GLYCOSYLATION [LARGE SCALE ANALYSIS] AT ASN-246; ASN-264 AND ASN-269</scope>
    <scope>IDENTIFICATION BY MASS SPECTROMETRY</scope>
</reference>
<organism>
    <name type="scientific">Drosophila melanogaster</name>
    <name type="common">Fruit fly</name>
    <dbReference type="NCBI Taxonomy" id="7227"/>
    <lineage>
        <taxon>Eukaryota</taxon>
        <taxon>Metazoa</taxon>
        <taxon>Ecdysozoa</taxon>
        <taxon>Arthropoda</taxon>
        <taxon>Hexapoda</taxon>
        <taxon>Insecta</taxon>
        <taxon>Pterygota</taxon>
        <taxon>Neoptera</taxon>
        <taxon>Endopterygota</taxon>
        <taxon>Diptera</taxon>
        <taxon>Brachycera</taxon>
        <taxon>Muscomorpha</taxon>
        <taxon>Ephydroidea</taxon>
        <taxon>Drosophilidae</taxon>
        <taxon>Drosophila</taxon>
        <taxon>Sophophora</taxon>
    </lineage>
</organism>
<gene>
    <name evidence="14" type="primary">hfw</name>
    <name evidence="13" type="synonym">swi</name>
    <name type="ORF">CG3095</name>
</gene>
<comment type="function">
    <text evidence="6">Has a role in the ecdysone induced cascade; probably indirect control of 'late' ecdysone genes.</text>
</comment>
<comment type="disruption phenotype">
    <text evidence="6">Mutants specifically interrupt the transmission of the regulatory signal from early to late ecdysone inducible genes.</text>
</comment>
<accession>Q9W568</accession>
<accession>O46061</accession>
<accession>Q8SZE5</accession>
<feature type="signal peptide" evidence="1">
    <location>
        <begin position="1"/>
        <end position="22"/>
    </location>
</feature>
<feature type="chain" id="PRO_0000021413" description="Protein halfway">
    <location>
        <begin position="23"/>
        <end position="611"/>
    </location>
</feature>
<feature type="repeat" description="LRR 1">
    <location>
        <begin position="236"/>
        <end position="257"/>
    </location>
</feature>
<feature type="repeat" description="LRR 2">
    <location>
        <begin position="259"/>
        <end position="280"/>
    </location>
</feature>
<feature type="repeat" description="LRR 3">
    <location>
        <begin position="283"/>
        <end position="304"/>
    </location>
</feature>
<feature type="repeat" description="LRR 4">
    <location>
        <begin position="313"/>
        <end position="334"/>
    </location>
</feature>
<feature type="domain" description="LRRNT">
    <location>
        <begin position="361"/>
        <end position="416"/>
    </location>
</feature>
<feature type="repeat" description="LRR 5">
    <location>
        <begin position="417"/>
        <end position="438"/>
    </location>
</feature>
<feature type="repeat" description="LRR 6">
    <location>
        <begin position="443"/>
        <end position="464"/>
    </location>
</feature>
<feature type="repeat" description="LRR 7">
    <location>
        <begin position="468"/>
        <end position="489"/>
    </location>
</feature>
<feature type="domain" description="LRRCT">
    <location>
        <begin position="505"/>
        <end position="554"/>
    </location>
</feature>
<feature type="region of interest" description="Disordered" evidence="2">
    <location>
        <begin position="31"/>
        <end position="64"/>
    </location>
</feature>
<feature type="region of interest" description="Disordered" evidence="2">
    <location>
        <begin position="90"/>
        <end position="132"/>
    </location>
</feature>
<feature type="region of interest" description="Disordered" evidence="2">
    <location>
        <begin position="154"/>
        <end position="185"/>
    </location>
</feature>
<feature type="compositionally biased region" description="Basic residues" evidence="2">
    <location>
        <begin position="43"/>
        <end position="59"/>
    </location>
</feature>
<feature type="compositionally biased region" description="Polar residues" evidence="2">
    <location>
        <begin position="90"/>
        <end position="101"/>
    </location>
</feature>
<feature type="compositionally biased region" description="Low complexity" evidence="2">
    <location>
        <begin position="102"/>
        <end position="123"/>
    </location>
</feature>
<feature type="compositionally biased region" description="Polar residues" evidence="2">
    <location>
        <begin position="159"/>
        <end position="183"/>
    </location>
</feature>
<feature type="glycosylation site" description="N-linked (GlcNAc...) asparagine" evidence="7">
    <location>
        <position position="221"/>
    </location>
</feature>
<feature type="glycosylation site" description="N-linked (GlcNAc...) asparagine" evidence="7 8">
    <location>
        <position position="246"/>
    </location>
</feature>
<feature type="glycosylation site" description="N-linked (GlcNAc...) asparagine" evidence="8">
    <location>
        <position position="264"/>
    </location>
</feature>
<feature type="glycosylation site" description="N-linked (GlcNAc...) asparagine" evidence="8">
    <location>
        <position position="269"/>
    </location>
</feature>
<feature type="mutagenesis site" description="In swi-t467; lethal during puparium formation." evidence="6">
    <original>C</original>
    <variation>Y</variation>
    <location>
        <position position="379"/>
    </location>
</feature>
<feature type="sequence conflict" description="In Ref. 5; AAL48553." evidence="9" ref="5">
    <original>E</original>
    <variation>K</variation>
    <location>
        <position position="84"/>
    </location>
</feature>
<name>HFW1_DROME</name>
<sequence>MLAYTHGTWLLLLLLLVAGACARPEIAHTPDPAALGEESTPHAHAHPQARHHHHAHPHAPLKEDEQGTAIPAPILTTDNVGIGETTTASSLAETQSMSDPGSVTDTTSTSTSHSTSTTSTTSPAPLPPAAPEQPEYLKHCFYAEEQLCGHTFDGRAETSEGQGSTVAQSEAQNRGGQGNSQCQCREHPTRPNSWYCCNISQLTMISSCSNISKWTNLHVRNMTVEDMDLSNPIFRSLQSLAVTDGNITRLVNAFPRLSALKCLNISNNNISEIHSRAVKDVPHLEFFGMSNNNLSLVPHRNQNKNITLDISGNMRMLCTPLNEIIYTESINFLNPKHSYCQYNATHTWFQSTDKVSVEQLENRKRCVTNCPVIPNYGSCNCTLENIMIIQDNQSKPQCHVDCSNLGLVELPQRLPDNTFMLNITNNKITSLGDYFHTNPTYHNINRLLADNNQISSIYEFEGTKFIETFQRIYMRNNSLSKIPEYFLNNALMDSGLGRRIYLAGNKLQCDCNSAKTLQNWLKERSSDIPDYMEIRCRNMPQRVIELQEAKLCQSPPDWTDYIYYLIAAEVLLLLALITKVSYDYWVFKTAGYLPWPASKMPKLPCDWLCES</sequence>
<keyword id="KW-0325">Glycoprotein</keyword>
<keyword id="KW-0433">Leucine-rich repeat</keyword>
<keyword id="KW-1185">Reference proteome</keyword>
<keyword id="KW-0677">Repeat</keyword>
<keyword id="KW-0732">Signal</keyword>
<proteinExistence type="evidence at protein level"/>
<dbReference type="EMBL" id="AJ626646">
    <property type="protein sequence ID" value="CAF25166.1"/>
    <property type="molecule type" value="Genomic_DNA"/>
</dbReference>
<dbReference type="EMBL" id="AE014298">
    <property type="protein sequence ID" value="AAF45654.3"/>
    <property type="molecule type" value="Genomic_DNA"/>
</dbReference>
<dbReference type="EMBL" id="AL021726">
    <property type="protein sequence ID" value="CAA16810.1"/>
    <property type="molecule type" value="Genomic_DNA"/>
</dbReference>
<dbReference type="EMBL" id="AY070931">
    <property type="protein sequence ID" value="AAL48553.1"/>
    <property type="molecule type" value="mRNA"/>
</dbReference>
<dbReference type="RefSeq" id="NP_001259135.1">
    <property type="nucleotide sequence ID" value="NM_001272206.1"/>
</dbReference>
<dbReference type="RefSeq" id="NP_569933.2">
    <property type="nucleotide sequence ID" value="NM_130577.4"/>
</dbReference>
<dbReference type="SMR" id="Q9W568"/>
<dbReference type="BioGRID" id="57671">
    <property type="interactions" value="1"/>
</dbReference>
<dbReference type="FunCoup" id="Q9W568">
    <property type="interactions" value="4"/>
</dbReference>
<dbReference type="STRING" id="7227.FBpp0305326"/>
<dbReference type="GlyCosmos" id="Q9W568">
    <property type="glycosylation" value="4 sites, No reported glycans"/>
</dbReference>
<dbReference type="GlyGen" id="Q9W568">
    <property type="glycosylation" value="4 sites"/>
</dbReference>
<dbReference type="iPTMnet" id="Q9W568"/>
<dbReference type="PaxDb" id="7227-FBpp0305326"/>
<dbReference type="DNASU" id="31120"/>
<dbReference type="EnsemblMetazoa" id="FBtr0070270">
    <property type="protein sequence ID" value="FBpp0070260"/>
    <property type="gene ID" value="FBgn0001189"/>
</dbReference>
<dbReference type="EnsemblMetazoa" id="FBtr0333115">
    <property type="protein sequence ID" value="FBpp0305326"/>
    <property type="gene ID" value="FBgn0001189"/>
</dbReference>
<dbReference type="GeneID" id="31120"/>
<dbReference type="KEGG" id="dme:Dmel_CG3095"/>
<dbReference type="AGR" id="FB:FBgn0001189"/>
<dbReference type="CTD" id="31120"/>
<dbReference type="FlyBase" id="FBgn0001189">
    <property type="gene designation" value="hfw"/>
</dbReference>
<dbReference type="VEuPathDB" id="VectorBase:FBgn0001189"/>
<dbReference type="eggNOG" id="KOG0619">
    <property type="taxonomic scope" value="Eukaryota"/>
</dbReference>
<dbReference type="HOGENOM" id="CLU_028059_2_0_1"/>
<dbReference type="InParanoid" id="Q9W568"/>
<dbReference type="OMA" id="RLQCDCN"/>
<dbReference type="OrthoDB" id="10068119at2759"/>
<dbReference type="PhylomeDB" id="Q9W568"/>
<dbReference type="BioGRID-ORCS" id="31120">
    <property type="hits" value="0 hits in 1 CRISPR screen"/>
</dbReference>
<dbReference type="ChiTaRS" id="Iswi">
    <property type="organism name" value="fly"/>
</dbReference>
<dbReference type="GenomeRNAi" id="31120"/>
<dbReference type="PRO" id="PR:Q9W568"/>
<dbReference type="Proteomes" id="UP000000803">
    <property type="component" value="Chromosome X"/>
</dbReference>
<dbReference type="Bgee" id="FBgn0001189">
    <property type="expression patterns" value="Expressed in adult Malpighian tubule stellate cell of main segment in Malpighian tubule and 114 other cell types or tissues"/>
</dbReference>
<dbReference type="ExpressionAtlas" id="Q9W568">
    <property type="expression patterns" value="baseline and differential"/>
</dbReference>
<dbReference type="GO" id="GO:0035556">
    <property type="term" value="P:intracellular signal transduction"/>
    <property type="evidence" value="ECO:0000315"/>
    <property type="project" value="UniProtKB"/>
</dbReference>
<dbReference type="GO" id="GO:0035073">
    <property type="term" value="P:pupariation"/>
    <property type="evidence" value="ECO:0000315"/>
    <property type="project" value="UniProtKB"/>
</dbReference>
<dbReference type="GO" id="GO:0035075">
    <property type="term" value="P:response to ecdysone"/>
    <property type="evidence" value="ECO:0000315"/>
    <property type="project" value="UniProtKB"/>
</dbReference>
<dbReference type="FunFam" id="3.80.10.10:FF:000867">
    <property type="entry name" value="Blast:Protein halfway"/>
    <property type="match status" value="1"/>
</dbReference>
<dbReference type="FunFam" id="3.80.10.10:FF:001217">
    <property type="entry name" value="Protein halfway"/>
    <property type="match status" value="1"/>
</dbReference>
<dbReference type="Gene3D" id="3.80.10.10">
    <property type="entry name" value="Ribonuclease Inhibitor"/>
    <property type="match status" value="2"/>
</dbReference>
<dbReference type="InterPro" id="IPR001611">
    <property type="entry name" value="Leu-rich_rpt"/>
</dbReference>
<dbReference type="InterPro" id="IPR032675">
    <property type="entry name" value="LRR_dom_sf"/>
</dbReference>
<dbReference type="InterPro" id="IPR050333">
    <property type="entry name" value="SLRP"/>
</dbReference>
<dbReference type="PANTHER" id="PTHR45712">
    <property type="entry name" value="AGAP008170-PA"/>
    <property type="match status" value="1"/>
</dbReference>
<dbReference type="PANTHER" id="PTHR45712:SF22">
    <property type="entry name" value="INSULIN-LIKE GROWTH FACTOR-BINDING PROTEIN COMPLEX ACID LABILE SUBUNIT"/>
    <property type="match status" value="1"/>
</dbReference>
<dbReference type="Pfam" id="PF13855">
    <property type="entry name" value="LRR_8"/>
    <property type="match status" value="1"/>
</dbReference>
<dbReference type="SUPFAM" id="SSF52058">
    <property type="entry name" value="L domain-like"/>
    <property type="match status" value="1"/>
</dbReference>